<accession>A8A599</accession>
<evidence type="ECO:0000255" key="1">
    <source>
        <dbReference type="HAMAP-Rule" id="MF_01368"/>
    </source>
</evidence>
<evidence type="ECO:0000305" key="2"/>
<protein>
    <recommendedName>
        <fullName evidence="1">Large ribosomal subunit protein bL17</fullName>
    </recommendedName>
    <alternativeName>
        <fullName evidence="2">50S ribosomal protein L17</fullName>
    </alternativeName>
</protein>
<feature type="chain" id="PRO_1000068020" description="Large ribosomal subunit protein bL17">
    <location>
        <begin position="1"/>
        <end position="127"/>
    </location>
</feature>
<organism>
    <name type="scientific">Escherichia coli O9:H4 (strain HS)</name>
    <dbReference type="NCBI Taxonomy" id="331112"/>
    <lineage>
        <taxon>Bacteria</taxon>
        <taxon>Pseudomonadati</taxon>
        <taxon>Pseudomonadota</taxon>
        <taxon>Gammaproteobacteria</taxon>
        <taxon>Enterobacterales</taxon>
        <taxon>Enterobacteriaceae</taxon>
        <taxon>Escherichia</taxon>
    </lineage>
</organism>
<comment type="subunit">
    <text evidence="1">Part of the 50S ribosomal subunit. Contacts protein L32.</text>
</comment>
<comment type="similarity">
    <text evidence="1">Belongs to the bacterial ribosomal protein bL17 family.</text>
</comment>
<dbReference type="EMBL" id="CP000802">
    <property type="protein sequence ID" value="ABV07703.1"/>
    <property type="molecule type" value="Genomic_DNA"/>
</dbReference>
<dbReference type="RefSeq" id="WP_001216368.1">
    <property type="nucleotide sequence ID" value="NC_009800.1"/>
</dbReference>
<dbReference type="SMR" id="A8A599"/>
<dbReference type="GeneID" id="97442834"/>
<dbReference type="KEGG" id="ecx:EcHS_A3488"/>
<dbReference type="HOGENOM" id="CLU_074407_2_0_6"/>
<dbReference type="GO" id="GO:0022625">
    <property type="term" value="C:cytosolic large ribosomal subunit"/>
    <property type="evidence" value="ECO:0007669"/>
    <property type="project" value="TreeGrafter"/>
</dbReference>
<dbReference type="GO" id="GO:0003735">
    <property type="term" value="F:structural constituent of ribosome"/>
    <property type="evidence" value="ECO:0007669"/>
    <property type="project" value="InterPro"/>
</dbReference>
<dbReference type="GO" id="GO:0006412">
    <property type="term" value="P:translation"/>
    <property type="evidence" value="ECO:0007669"/>
    <property type="project" value="UniProtKB-UniRule"/>
</dbReference>
<dbReference type="FunFam" id="3.90.1030.10:FF:000001">
    <property type="entry name" value="50S ribosomal protein L17"/>
    <property type="match status" value="1"/>
</dbReference>
<dbReference type="Gene3D" id="3.90.1030.10">
    <property type="entry name" value="Ribosomal protein L17"/>
    <property type="match status" value="1"/>
</dbReference>
<dbReference type="HAMAP" id="MF_01368">
    <property type="entry name" value="Ribosomal_bL17"/>
    <property type="match status" value="1"/>
</dbReference>
<dbReference type="InterPro" id="IPR000456">
    <property type="entry name" value="Ribosomal_bL17"/>
</dbReference>
<dbReference type="InterPro" id="IPR047859">
    <property type="entry name" value="Ribosomal_bL17_CS"/>
</dbReference>
<dbReference type="InterPro" id="IPR036373">
    <property type="entry name" value="Ribosomal_bL17_sf"/>
</dbReference>
<dbReference type="NCBIfam" id="TIGR00059">
    <property type="entry name" value="L17"/>
    <property type="match status" value="1"/>
</dbReference>
<dbReference type="PANTHER" id="PTHR14413:SF16">
    <property type="entry name" value="LARGE RIBOSOMAL SUBUNIT PROTEIN BL17M"/>
    <property type="match status" value="1"/>
</dbReference>
<dbReference type="PANTHER" id="PTHR14413">
    <property type="entry name" value="RIBOSOMAL PROTEIN L17"/>
    <property type="match status" value="1"/>
</dbReference>
<dbReference type="Pfam" id="PF01196">
    <property type="entry name" value="Ribosomal_L17"/>
    <property type="match status" value="1"/>
</dbReference>
<dbReference type="SUPFAM" id="SSF64263">
    <property type="entry name" value="Prokaryotic ribosomal protein L17"/>
    <property type="match status" value="1"/>
</dbReference>
<dbReference type="PROSITE" id="PS01167">
    <property type="entry name" value="RIBOSOMAL_L17"/>
    <property type="match status" value="1"/>
</dbReference>
<proteinExistence type="inferred from homology"/>
<name>RL17_ECOHS</name>
<gene>
    <name evidence="1" type="primary">rplQ</name>
    <name type="ordered locus">EcHS_A3488</name>
</gene>
<keyword id="KW-0687">Ribonucleoprotein</keyword>
<keyword id="KW-0689">Ribosomal protein</keyword>
<reference key="1">
    <citation type="journal article" date="2008" name="J. Bacteriol.">
        <title>The pangenome structure of Escherichia coli: comparative genomic analysis of E. coli commensal and pathogenic isolates.</title>
        <authorList>
            <person name="Rasko D.A."/>
            <person name="Rosovitz M.J."/>
            <person name="Myers G.S.A."/>
            <person name="Mongodin E.F."/>
            <person name="Fricke W.F."/>
            <person name="Gajer P."/>
            <person name="Crabtree J."/>
            <person name="Sebaihia M."/>
            <person name="Thomson N.R."/>
            <person name="Chaudhuri R."/>
            <person name="Henderson I.R."/>
            <person name="Sperandio V."/>
            <person name="Ravel J."/>
        </authorList>
    </citation>
    <scope>NUCLEOTIDE SEQUENCE [LARGE SCALE GENOMIC DNA]</scope>
    <source>
        <strain>HS</strain>
    </source>
</reference>
<sequence length="127" mass="14365">MRHRKSGRQLNRNSSHRQAMFRNMAGSLVRHEIIKTTLPKAKELRRVVEPLITLAKTDSVANRRLAFARTRDNEIVAKLFNELGPRFASRAGGYTRILKCGFRAGDNAPMAYIELVDRSEKAEAAAE</sequence>